<evidence type="ECO:0000250" key="1"/>
<evidence type="ECO:0000305" key="2"/>
<accession>Q9CIK7</accession>
<comment type="function">
    <text evidence="1">Increases the formation of ribosomal termination complexes and stimulates activities of RF-1 and RF-2. It binds guanine nucleotides and has strong preference for UGA stop codons. It may interact directly with the ribosome. The stimulation of RF-1 and RF-2 is significantly reduced by GTP and GDP, but not by GMP (By similarity).</text>
</comment>
<comment type="subcellular location">
    <subcellularLocation>
        <location evidence="1">Cytoplasm</location>
    </subcellularLocation>
</comment>
<comment type="similarity">
    <text evidence="2">Belongs to the TRAFAC class translation factor GTPase superfamily. Classic translation factor GTPase family. PrfC subfamily.</text>
</comment>
<protein>
    <recommendedName>
        <fullName>Peptide chain release factor 3</fullName>
        <shortName>RF-3</shortName>
    </recommendedName>
</protein>
<organism>
    <name type="scientific">Lactococcus lactis subsp. lactis (strain IL1403)</name>
    <name type="common">Streptococcus lactis</name>
    <dbReference type="NCBI Taxonomy" id="272623"/>
    <lineage>
        <taxon>Bacteria</taxon>
        <taxon>Bacillati</taxon>
        <taxon>Bacillota</taxon>
        <taxon>Bacilli</taxon>
        <taxon>Lactobacillales</taxon>
        <taxon>Streptococcaceae</taxon>
        <taxon>Lactococcus</taxon>
    </lineage>
</organism>
<proteinExistence type="inferred from homology"/>
<name>RF3_LACLA</name>
<dbReference type="EMBL" id="AE005176">
    <property type="protein sequence ID" value="AAK04447.1"/>
    <property type="molecule type" value="Genomic_DNA"/>
</dbReference>
<dbReference type="PIR" id="E86668">
    <property type="entry name" value="E86668"/>
</dbReference>
<dbReference type="RefSeq" id="NP_266505.1">
    <property type="nucleotide sequence ID" value="NC_002662.1"/>
</dbReference>
<dbReference type="RefSeq" id="WP_003131635.1">
    <property type="nucleotide sequence ID" value="NC_002662.1"/>
</dbReference>
<dbReference type="SMR" id="Q9CIK7"/>
<dbReference type="PaxDb" id="272623-L0369"/>
<dbReference type="EnsemblBacteria" id="AAK04447">
    <property type="protein sequence ID" value="AAK04447"/>
    <property type="gene ID" value="L0369"/>
</dbReference>
<dbReference type="KEGG" id="lla:L0369"/>
<dbReference type="PATRIC" id="fig|272623.7.peg.382"/>
<dbReference type="eggNOG" id="COG4108">
    <property type="taxonomic scope" value="Bacteria"/>
</dbReference>
<dbReference type="HOGENOM" id="CLU_002794_2_1_9"/>
<dbReference type="OrthoDB" id="9804431at2"/>
<dbReference type="Proteomes" id="UP000002196">
    <property type="component" value="Chromosome"/>
</dbReference>
<dbReference type="GO" id="GO:0005829">
    <property type="term" value="C:cytosol"/>
    <property type="evidence" value="ECO:0007669"/>
    <property type="project" value="TreeGrafter"/>
</dbReference>
<dbReference type="GO" id="GO:0005525">
    <property type="term" value="F:GTP binding"/>
    <property type="evidence" value="ECO:0007669"/>
    <property type="project" value="UniProtKB-UniRule"/>
</dbReference>
<dbReference type="GO" id="GO:0003924">
    <property type="term" value="F:GTPase activity"/>
    <property type="evidence" value="ECO:0007669"/>
    <property type="project" value="InterPro"/>
</dbReference>
<dbReference type="GO" id="GO:0016150">
    <property type="term" value="F:translation release factor activity, codon nonspecific"/>
    <property type="evidence" value="ECO:0007669"/>
    <property type="project" value="TreeGrafter"/>
</dbReference>
<dbReference type="GO" id="GO:0016149">
    <property type="term" value="F:translation release factor activity, codon specific"/>
    <property type="evidence" value="ECO:0007669"/>
    <property type="project" value="UniProtKB-UniRule"/>
</dbReference>
<dbReference type="GO" id="GO:0006449">
    <property type="term" value="P:regulation of translational termination"/>
    <property type="evidence" value="ECO:0007669"/>
    <property type="project" value="UniProtKB-UniRule"/>
</dbReference>
<dbReference type="CDD" id="cd04169">
    <property type="entry name" value="RF3"/>
    <property type="match status" value="1"/>
</dbReference>
<dbReference type="FunFam" id="2.40.30.10:FF:000040">
    <property type="entry name" value="Peptide chain release factor 3"/>
    <property type="match status" value="1"/>
</dbReference>
<dbReference type="FunFam" id="3.30.70.3280:FF:000001">
    <property type="entry name" value="Peptide chain release factor 3"/>
    <property type="match status" value="1"/>
</dbReference>
<dbReference type="FunFam" id="3.40.50.300:FF:000542">
    <property type="entry name" value="Peptide chain release factor 3"/>
    <property type="match status" value="1"/>
</dbReference>
<dbReference type="Gene3D" id="3.40.50.300">
    <property type="entry name" value="P-loop containing nucleotide triphosphate hydrolases"/>
    <property type="match status" value="1"/>
</dbReference>
<dbReference type="Gene3D" id="3.30.70.3280">
    <property type="entry name" value="Peptide chain release factor 3, domain III"/>
    <property type="match status" value="1"/>
</dbReference>
<dbReference type="Gene3D" id="2.40.30.10">
    <property type="entry name" value="Translation factors"/>
    <property type="match status" value="1"/>
</dbReference>
<dbReference type="HAMAP" id="MF_00072">
    <property type="entry name" value="Rel_fac_3"/>
    <property type="match status" value="1"/>
</dbReference>
<dbReference type="InterPro" id="IPR053905">
    <property type="entry name" value="EF-G-like_DII"/>
</dbReference>
<dbReference type="InterPro" id="IPR035647">
    <property type="entry name" value="EFG_III/V"/>
</dbReference>
<dbReference type="InterPro" id="IPR031157">
    <property type="entry name" value="G_TR_CS"/>
</dbReference>
<dbReference type="InterPro" id="IPR027417">
    <property type="entry name" value="P-loop_NTPase"/>
</dbReference>
<dbReference type="InterPro" id="IPR004548">
    <property type="entry name" value="PrfC"/>
</dbReference>
<dbReference type="InterPro" id="IPR032090">
    <property type="entry name" value="RF3_C"/>
</dbReference>
<dbReference type="InterPro" id="IPR038467">
    <property type="entry name" value="RF3_dom_3_sf"/>
</dbReference>
<dbReference type="InterPro" id="IPR041732">
    <property type="entry name" value="RF3_GTP-bd"/>
</dbReference>
<dbReference type="InterPro" id="IPR005225">
    <property type="entry name" value="Small_GTP-bd"/>
</dbReference>
<dbReference type="InterPro" id="IPR000795">
    <property type="entry name" value="T_Tr_GTP-bd_dom"/>
</dbReference>
<dbReference type="InterPro" id="IPR009000">
    <property type="entry name" value="Transl_B-barrel_sf"/>
</dbReference>
<dbReference type="NCBIfam" id="TIGR00503">
    <property type="entry name" value="prfC"/>
    <property type="match status" value="1"/>
</dbReference>
<dbReference type="NCBIfam" id="NF001964">
    <property type="entry name" value="PRK00741.1"/>
    <property type="match status" value="1"/>
</dbReference>
<dbReference type="NCBIfam" id="TIGR00231">
    <property type="entry name" value="small_GTP"/>
    <property type="match status" value="1"/>
</dbReference>
<dbReference type="PANTHER" id="PTHR43556">
    <property type="entry name" value="PEPTIDE CHAIN RELEASE FACTOR RF3"/>
    <property type="match status" value="1"/>
</dbReference>
<dbReference type="PANTHER" id="PTHR43556:SF2">
    <property type="entry name" value="PEPTIDE CHAIN RELEASE FACTOR RF3"/>
    <property type="match status" value="1"/>
</dbReference>
<dbReference type="Pfam" id="PF22042">
    <property type="entry name" value="EF-G_D2"/>
    <property type="match status" value="1"/>
</dbReference>
<dbReference type="Pfam" id="PF00009">
    <property type="entry name" value="GTP_EFTU"/>
    <property type="match status" value="1"/>
</dbReference>
<dbReference type="Pfam" id="PF16658">
    <property type="entry name" value="RF3_C"/>
    <property type="match status" value="1"/>
</dbReference>
<dbReference type="PRINTS" id="PR00315">
    <property type="entry name" value="ELONGATNFCT"/>
</dbReference>
<dbReference type="SUPFAM" id="SSF54980">
    <property type="entry name" value="EF-G C-terminal domain-like"/>
    <property type="match status" value="1"/>
</dbReference>
<dbReference type="SUPFAM" id="SSF52540">
    <property type="entry name" value="P-loop containing nucleoside triphosphate hydrolases"/>
    <property type="match status" value="1"/>
</dbReference>
<dbReference type="SUPFAM" id="SSF50447">
    <property type="entry name" value="Translation proteins"/>
    <property type="match status" value="1"/>
</dbReference>
<dbReference type="PROSITE" id="PS00301">
    <property type="entry name" value="G_TR_1"/>
    <property type="match status" value="1"/>
</dbReference>
<dbReference type="PROSITE" id="PS51722">
    <property type="entry name" value="G_TR_2"/>
    <property type="match status" value="1"/>
</dbReference>
<sequence>MTLQEEIKKRRTFAIISHPDAGKTTITEQLLKFGGAIREAGTVKARKTGNFAKSDWMDIEKERGISVTSSVMQFDYAGKRVNILDTPGHEDFSEDTYRTLMAVDAAVMVIDSAKGIEAQTKKLFQVVKRRGIPVFTFINKLDRDGREPLDLLSELEEILGIASVPMNWPIGMGKNFQGLYDFTHGRVEVYQPEDGKRFVEFDENGEVPASHPLTKNPFFTQALEDAELLLDAGNQFSEEEVVAGQLTPVFFGSALTSFGVETFLETFLEYAPEPHSHKTVDEEEIEPLNPDFSGFIFKIQANMDPRHRDRIAFVRIVSGEFERGMDVNLIRTGKKVKLSNVTQFMAESRENVENAVAGDIIGVYDTGTYQVGDTLTTGKLKKSFEPLPTFTPELFMRVQAKNVMKQKSFQKGIDQLVQEGAIQLYKSYTTGDIMLGAVGQLQFEVFKDRMEREYNSETIMTPMGTKTVRWIKEEDLDEKMSSSRNILARDRFDHPLFLFENEFAMRWFKDKYPDVELMEQFSV</sequence>
<feature type="chain" id="PRO_0000210945" description="Peptide chain release factor 3">
    <location>
        <begin position="1"/>
        <end position="523"/>
    </location>
</feature>
<feature type="domain" description="tr-type G">
    <location>
        <begin position="8"/>
        <end position="275"/>
    </location>
</feature>
<feature type="binding site" evidence="1">
    <location>
        <begin position="17"/>
        <end position="24"/>
    </location>
    <ligand>
        <name>GTP</name>
        <dbReference type="ChEBI" id="CHEBI:37565"/>
    </ligand>
</feature>
<feature type="binding site" evidence="1">
    <location>
        <begin position="85"/>
        <end position="89"/>
    </location>
    <ligand>
        <name>GTP</name>
        <dbReference type="ChEBI" id="CHEBI:37565"/>
    </ligand>
</feature>
<feature type="binding site" evidence="1">
    <location>
        <begin position="139"/>
        <end position="142"/>
    </location>
    <ligand>
        <name>GTP</name>
        <dbReference type="ChEBI" id="CHEBI:37565"/>
    </ligand>
</feature>
<keyword id="KW-0963">Cytoplasm</keyword>
<keyword id="KW-0342">GTP-binding</keyword>
<keyword id="KW-0547">Nucleotide-binding</keyword>
<keyword id="KW-0648">Protein biosynthesis</keyword>
<keyword id="KW-1185">Reference proteome</keyword>
<gene>
    <name type="primary">prfC</name>
    <name type="ordered locus">LL0349</name>
    <name type="ORF">L0369</name>
</gene>
<reference key="1">
    <citation type="journal article" date="2001" name="Genome Res.">
        <title>The complete genome sequence of the lactic acid bacterium Lactococcus lactis ssp. lactis IL1403.</title>
        <authorList>
            <person name="Bolotin A."/>
            <person name="Wincker P."/>
            <person name="Mauger S."/>
            <person name="Jaillon O."/>
            <person name="Malarme K."/>
            <person name="Weissenbach J."/>
            <person name="Ehrlich S.D."/>
            <person name="Sorokin A."/>
        </authorList>
    </citation>
    <scope>NUCLEOTIDE SEQUENCE [LARGE SCALE GENOMIC DNA]</scope>
    <source>
        <strain>IL1403</strain>
    </source>
</reference>